<proteinExistence type="inferred from homology"/>
<dbReference type="EMBL" id="CP000661">
    <property type="protein sequence ID" value="ABP71810.1"/>
    <property type="status" value="ALT_INIT"/>
    <property type="molecule type" value="Genomic_DNA"/>
</dbReference>
<dbReference type="SMR" id="A4WWP6"/>
<dbReference type="STRING" id="349102.Rsph17025_2924"/>
<dbReference type="KEGG" id="rsq:Rsph17025_2924"/>
<dbReference type="eggNOG" id="COG0858">
    <property type="taxonomic scope" value="Bacteria"/>
</dbReference>
<dbReference type="HOGENOM" id="CLU_089475_1_0_5"/>
<dbReference type="BioCyc" id="RSPH349102:G1G8M-3020-MONOMER"/>
<dbReference type="GO" id="GO:0005829">
    <property type="term" value="C:cytosol"/>
    <property type="evidence" value="ECO:0007669"/>
    <property type="project" value="TreeGrafter"/>
</dbReference>
<dbReference type="GO" id="GO:0043024">
    <property type="term" value="F:ribosomal small subunit binding"/>
    <property type="evidence" value="ECO:0007669"/>
    <property type="project" value="TreeGrafter"/>
</dbReference>
<dbReference type="GO" id="GO:0030490">
    <property type="term" value="P:maturation of SSU-rRNA"/>
    <property type="evidence" value="ECO:0007669"/>
    <property type="project" value="UniProtKB-UniRule"/>
</dbReference>
<dbReference type="Gene3D" id="3.30.300.20">
    <property type="match status" value="1"/>
</dbReference>
<dbReference type="HAMAP" id="MF_00003">
    <property type="entry name" value="RbfA"/>
    <property type="match status" value="1"/>
</dbReference>
<dbReference type="InterPro" id="IPR015946">
    <property type="entry name" value="KH_dom-like_a/b"/>
</dbReference>
<dbReference type="InterPro" id="IPR000238">
    <property type="entry name" value="RbfA"/>
</dbReference>
<dbReference type="InterPro" id="IPR023799">
    <property type="entry name" value="RbfA_dom_sf"/>
</dbReference>
<dbReference type="InterPro" id="IPR020053">
    <property type="entry name" value="Ribosome-bd_factorA_CS"/>
</dbReference>
<dbReference type="NCBIfam" id="NF001802">
    <property type="entry name" value="PRK00521.2-5"/>
    <property type="match status" value="1"/>
</dbReference>
<dbReference type="PANTHER" id="PTHR33515">
    <property type="entry name" value="RIBOSOME-BINDING FACTOR A, CHLOROPLASTIC-RELATED"/>
    <property type="match status" value="1"/>
</dbReference>
<dbReference type="PANTHER" id="PTHR33515:SF1">
    <property type="entry name" value="RIBOSOME-BINDING FACTOR A, CHLOROPLASTIC-RELATED"/>
    <property type="match status" value="1"/>
</dbReference>
<dbReference type="Pfam" id="PF02033">
    <property type="entry name" value="RBFA"/>
    <property type="match status" value="1"/>
</dbReference>
<dbReference type="SUPFAM" id="SSF89919">
    <property type="entry name" value="Ribosome-binding factor A, RbfA"/>
    <property type="match status" value="1"/>
</dbReference>
<dbReference type="PROSITE" id="PS01319">
    <property type="entry name" value="RBFA"/>
    <property type="match status" value="1"/>
</dbReference>
<sequence>MGRMAHRSHTGTGPSQRQLRVGELIRRTLADVLNRGEIHDPDLNRMSITVGEVRCSPDLKVATVHVMPLGGKDVEEAIALLSKHRGELRHHITRQMTLKYAPDLRFRPDETFDRLDETRRLFSDETVQRDIRGSGDGDED</sequence>
<comment type="function">
    <text evidence="1">One of several proteins that assist in the late maturation steps of the functional core of the 30S ribosomal subunit. Associates with free 30S ribosomal subunits (but not with 30S subunits that are part of 70S ribosomes or polysomes). Required for efficient processing of 16S rRNA. May interact with the 5'-terminal helix region of 16S rRNA.</text>
</comment>
<comment type="subunit">
    <text evidence="1">Monomer. Binds 30S ribosomal subunits, but not 50S ribosomal subunits or 70S ribosomes.</text>
</comment>
<comment type="subcellular location">
    <subcellularLocation>
        <location evidence="1">Cytoplasm</location>
    </subcellularLocation>
</comment>
<comment type="similarity">
    <text evidence="1">Belongs to the RbfA family.</text>
</comment>
<comment type="sequence caution" evidence="2">
    <conflict type="erroneous initiation">
        <sequence resource="EMBL-CDS" id="ABP71810"/>
    </conflict>
    <text>Extended N-terminus.</text>
</comment>
<accession>A4WWP6</accession>
<organism>
    <name type="scientific">Cereibacter sphaeroides (strain ATCC 17025 / ATH 2.4.3)</name>
    <name type="common">Rhodobacter sphaeroides</name>
    <dbReference type="NCBI Taxonomy" id="349102"/>
    <lineage>
        <taxon>Bacteria</taxon>
        <taxon>Pseudomonadati</taxon>
        <taxon>Pseudomonadota</taxon>
        <taxon>Alphaproteobacteria</taxon>
        <taxon>Rhodobacterales</taxon>
        <taxon>Paracoccaceae</taxon>
        <taxon>Cereibacter</taxon>
    </lineage>
</organism>
<reference key="1">
    <citation type="submission" date="2007-04" db="EMBL/GenBank/DDBJ databases">
        <title>Complete sequence of chromosome of Rhodobacter sphaeroides ATCC 17025.</title>
        <authorList>
            <consortium name="US DOE Joint Genome Institute"/>
            <person name="Copeland A."/>
            <person name="Lucas S."/>
            <person name="Lapidus A."/>
            <person name="Barry K."/>
            <person name="Detter J.C."/>
            <person name="Glavina del Rio T."/>
            <person name="Hammon N."/>
            <person name="Israni S."/>
            <person name="Dalin E."/>
            <person name="Tice H."/>
            <person name="Pitluck S."/>
            <person name="Chertkov O."/>
            <person name="Brettin T."/>
            <person name="Bruce D."/>
            <person name="Han C."/>
            <person name="Schmutz J."/>
            <person name="Larimer F."/>
            <person name="Land M."/>
            <person name="Hauser L."/>
            <person name="Kyrpides N."/>
            <person name="Kim E."/>
            <person name="Richardson P."/>
            <person name="Mackenzie C."/>
            <person name="Choudhary M."/>
            <person name="Donohue T.J."/>
            <person name="Kaplan S."/>
        </authorList>
    </citation>
    <scope>NUCLEOTIDE SEQUENCE [LARGE SCALE GENOMIC DNA]</scope>
    <source>
        <strain>ATCC 17025 / ATH 2.4.3</strain>
    </source>
</reference>
<keyword id="KW-0963">Cytoplasm</keyword>
<keyword id="KW-0690">Ribosome biogenesis</keyword>
<feature type="chain" id="PRO_0000321244" description="Ribosome-binding factor A">
    <location>
        <begin position="1"/>
        <end position="140"/>
    </location>
</feature>
<protein>
    <recommendedName>
        <fullName evidence="1">Ribosome-binding factor A</fullName>
    </recommendedName>
</protein>
<evidence type="ECO:0000255" key="1">
    <source>
        <dbReference type="HAMAP-Rule" id="MF_00003"/>
    </source>
</evidence>
<evidence type="ECO:0000305" key="2"/>
<name>RBFA_CERS5</name>
<gene>
    <name evidence="1" type="primary">rbfA</name>
    <name type="ordered locus">Rsph17025_2924</name>
</gene>